<accession>Q0KF70</accession>
<dbReference type="EC" id="3.4.25.2" evidence="1"/>
<dbReference type="EMBL" id="AM260479">
    <property type="protein sequence ID" value="CAJ91351.1"/>
    <property type="molecule type" value="Genomic_DNA"/>
</dbReference>
<dbReference type="RefSeq" id="WP_011614397.1">
    <property type="nucleotide sequence ID" value="NC_008313.1"/>
</dbReference>
<dbReference type="SMR" id="Q0KF70"/>
<dbReference type="STRING" id="381666.H16_A0199"/>
<dbReference type="MEROPS" id="T01.006"/>
<dbReference type="KEGG" id="reh:H16_A0199"/>
<dbReference type="PATRIC" id="fig|381666.6.peg.556"/>
<dbReference type="eggNOG" id="COG5405">
    <property type="taxonomic scope" value="Bacteria"/>
</dbReference>
<dbReference type="HOGENOM" id="CLU_093872_1_0_4"/>
<dbReference type="OrthoDB" id="9804884at2"/>
<dbReference type="Proteomes" id="UP000008210">
    <property type="component" value="Chromosome 1"/>
</dbReference>
<dbReference type="GO" id="GO:0009376">
    <property type="term" value="C:HslUV protease complex"/>
    <property type="evidence" value="ECO:0007669"/>
    <property type="project" value="UniProtKB-UniRule"/>
</dbReference>
<dbReference type="GO" id="GO:0005839">
    <property type="term" value="C:proteasome core complex"/>
    <property type="evidence" value="ECO:0007669"/>
    <property type="project" value="InterPro"/>
</dbReference>
<dbReference type="GO" id="GO:0046872">
    <property type="term" value="F:metal ion binding"/>
    <property type="evidence" value="ECO:0007669"/>
    <property type="project" value="UniProtKB-KW"/>
</dbReference>
<dbReference type="GO" id="GO:0004298">
    <property type="term" value="F:threonine-type endopeptidase activity"/>
    <property type="evidence" value="ECO:0007669"/>
    <property type="project" value="UniProtKB-KW"/>
</dbReference>
<dbReference type="GO" id="GO:0051603">
    <property type="term" value="P:proteolysis involved in protein catabolic process"/>
    <property type="evidence" value="ECO:0007669"/>
    <property type="project" value="InterPro"/>
</dbReference>
<dbReference type="CDD" id="cd01913">
    <property type="entry name" value="protease_HslV"/>
    <property type="match status" value="1"/>
</dbReference>
<dbReference type="FunFam" id="3.60.20.10:FF:000002">
    <property type="entry name" value="ATP-dependent protease subunit HslV"/>
    <property type="match status" value="1"/>
</dbReference>
<dbReference type="Gene3D" id="3.60.20.10">
    <property type="entry name" value="Glutamine Phosphoribosylpyrophosphate, subunit 1, domain 1"/>
    <property type="match status" value="1"/>
</dbReference>
<dbReference type="HAMAP" id="MF_00248">
    <property type="entry name" value="HslV"/>
    <property type="match status" value="1"/>
</dbReference>
<dbReference type="InterPro" id="IPR022281">
    <property type="entry name" value="ATP-dep_Prtase_HsIV_su"/>
</dbReference>
<dbReference type="InterPro" id="IPR029055">
    <property type="entry name" value="Ntn_hydrolases_N"/>
</dbReference>
<dbReference type="InterPro" id="IPR001353">
    <property type="entry name" value="Proteasome_sua/b"/>
</dbReference>
<dbReference type="InterPro" id="IPR023333">
    <property type="entry name" value="Proteasome_suB-type"/>
</dbReference>
<dbReference type="NCBIfam" id="TIGR03692">
    <property type="entry name" value="ATP_dep_HslV"/>
    <property type="match status" value="1"/>
</dbReference>
<dbReference type="NCBIfam" id="NF003964">
    <property type="entry name" value="PRK05456.1"/>
    <property type="match status" value="1"/>
</dbReference>
<dbReference type="PANTHER" id="PTHR32194:SF0">
    <property type="entry name" value="ATP-DEPENDENT PROTEASE SUBUNIT HSLV"/>
    <property type="match status" value="1"/>
</dbReference>
<dbReference type="PANTHER" id="PTHR32194">
    <property type="entry name" value="METALLOPROTEASE TLDD"/>
    <property type="match status" value="1"/>
</dbReference>
<dbReference type="Pfam" id="PF00227">
    <property type="entry name" value="Proteasome"/>
    <property type="match status" value="1"/>
</dbReference>
<dbReference type="PIRSF" id="PIRSF039093">
    <property type="entry name" value="HslV"/>
    <property type="match status" value="1"/>
</dbReference>
<dbReference type="SUPFAM" id="SSF56235">
    <property type="entry name" value="N-terminal nucleophile aminohydrolases (Ntn hydrolases)"/>
    <property type="match status" value="1"/>
</dbReference>
<dbReference type="PROSITE" id="PS51476">
    <property type="entry name" value="PROTEASOME_BETA_2"/>
    <property type="match status" value="1"/>
</dbReference>
<feature type="chain" id="PRO_1000012653" description="ATP-dependent protease subunit HslV">
    <location>
        <begin position="1"/>
        <end position="178"/>
    </location>
</feature>
<feature type="active site" evidence="1">
    <location>
        <position position="7"/>
    </location>
</feature>
<feature type="binding site" evidence="1">
    <location>
        <position position="162"/>
    </location>
    <ligand>
        <name>Na(+)</name>
        <dbReference type="ChEBI" id="CHEBI:29101"/>
    </ligand>
</feature>
<feature type="binding site" evidence="1">
    <location>
        <position position="165"/>
    </location>
    <ligand>
        <name>Na(+)</name>
        <dbReference type="ChEBI" id="CHEBI:29101"/>
    </ligand>
</feature>
<feature type="binding site" evidence="1">
    <location>
        <position position="168"/>
    </location>
    <ligand>
        <name>Na(+)</name>
        <dbReference type="ChEBI" id="CHEBI:29101"/>
    </ligand>
</feature>
<protein>
    <recommendedName>
        <fullName evidence="1">ATP-dependent protease subunit HslV</fullName>
        <ecNumber evidence="1">3.4.25.2</ecNumber>
    </recommendedName>
</protein>
<keyword id="KW-0021">Allosteric enzyme</keyword>
<keyword id="KW-0963">Cytoplasm</keyword>
<keyword id="KW-0378">Hydrolase</keyword>
<keyword id="KW-0479">Metal-binding</keyword>
<keyword id="KW-0645">Protease</keyword>
<keyword id="KW-1185">Reference proteome</keyword>
<keyword id="KW-0915">Sodium</keyword>
<keyword id="KW-0888">Threonine protease</keyword>
<gene>
    <name evidence="1" type="primary">hslV</name>
    <name type="ordered locus">H16_A0199</name>
</gene>
<reference key="1">
    <citation type="journal article" date="2006" name="Nat. Biotechnol.">
        <title>Genome sequence of the bioplastic-producing 'Knallgas' bacterium Ralstonia eutropha H16.</title>
        <authorList>
            <person name="Pohlmann A."/>
            <person name="Fricke W.F."/>
            <person name="Reinecke F."/>
            <person name="Kusian B."/>
            <person name="Liesegang H."/>
            <person name="Cramm R."/>
            <person name="Eitinger T."/>
            <person name="Ewering C."/>
            <person name="Poetter M."/>
            <person name="Schwartz E."/>
            <person name="Strittmatter A."/>
            <person name="Voss I."/>
            <person name="Gottschalk G."/>
            <person name="Steinbuechel A."/>
            <person name="Friedrich B."/>
            <person name="Bowien B."/>
        </authorList>
    </citation>
    <scope>NUCLEOTIDE SEQUENCE [LARGE SCALE GENOMIC DNA]</scope>
    <source>
        <strain>ATCC 17699 / DSM 428 / KCTC 22496 / NCIMB 10442 / H16 / Stanier 337</strain>
    </source>
</reference>
<name>HSLV_CUPNH</name>
<sequence>MEQYHGTTIVSVRRGNQVALGGDGQVTLGNIVMKGTARKVRRIYNGKVLVGFAGSTADAFSLLDRFEAKLEKYQGNLTRAAVDLAKDWRSDRALRRLEAMLITADRDTTLVITGNGDVLDPEGGIAAIGSGGAYAQSAAKALAENTEMAPKDVVEKALTIAGELCIYTNTNFVIETLE</sequence>
<proteinExistence type="inferred from homology"/>
<organism>
    <name type="scientific">Cupriavidus necator (strain ATCC 17699 / DSM 428 / KCTC 22496 / NCIMB 10442 / H16 / Stanier 337)</name>
    <name type="common">Ralstonia eutropha</name>
    <dbReference type="NCBI Taxonomy" id="381666"/>
    <lineage>
        <taxon>Bacteria</taxon>
        <taxon>Pseudomonadati</taxon>
        <taxon>Pseudomonadota</taxon>
        <taxon>Betaproteobacteria</taxon>
        <taxon>Burkholderiales</taxon>
        <taxon>Burkholderiaceae</taxon>
        <taxon>Cupriavidus</taxon>
    </lineage>
</organism>
<evidence type="ECO:0000255" key="1">
    <source>
        <dbReference type="HAMAP-Rule" id="MF_00248"/>
    </source>
</evidence>
<comment type="function">
    <text evidence="1">Protease subunit of a proteasome-like degradation complex believed to be a general protein degrading machinery.</text>
</comment>
<comment type="catalytic activity">
    <reaction evidence="1">
        <text>ATP-dependent cleavage of peptide bonds with broad specificity.</text>
        <dbReference type="EC" id="3.4.25.2"/>
    </reaction>
</comment>
<comment type="activity regulation">
    <text evidence="1">Allosterically activated by HslU binding.</text>
</comment>
<comment type="subunit">
    <text evidence="1">A double ring-shaped homohexamer of HslV is capped on each side by a ring-shaped HslU homohexamer. The assembly of the HslU/HslV complex is dependent on binding of ATP.</text>
</comment>
<comment type="subcellular location">
    <subcellularLocation>
        <location evidence="1">Cytoplasm</location>
    </subcellularLocation>
</comment>
<comment type="similarity">
    <text evidence="1">Belongs to the peptidase T1B family. HslV subfamily.</text>
</comment>